<feature type="chain" id="PRO_1000065848" description="UPF0434 protein PSPA7_2181">
    <location>
        <begin position="1"/>
        <end position="61"/>
    </location>
</feature>
<evidence type="ECO:0000255" key="1">
    <source>
        <dbReference type="HAMAP-Rule" id="MF_01187"/>
    </source>
</evidence>
<organism>
    <name type="scientific">Pseudomonas paraeruginosa (strain DSM 24068 / PA7)</name>
    <name type="common">Pseudomonas aeruginosa (strain PA7)</name>
    <dbReference type="NCBI Taxonomy" id="381754"/>
    <lineage>
        <taxon>Bacteria</taxon>
        <taxon>Pseudomonadati</taxon>
        <taxon>Pseudomonadota</taxon>
        <taxon>Gammaproteobacteria</taxon>
        <taxon>Pseudomonadales</taxon>
        <taxon>Pseudomonadaceae</taxon>
        <taxon>Pseudomonas</taxon>
        <taxon>Pseudomonas paraeruginosa</taxon>
    </lineage>
</organism>
<dbReference type="EMBL" id="CP000744">
    <property type="protein sequence ID" value="ABR85172.1"/>
    <property type="molecule type" value="Genomic_DNA"/>
</dbReference>
<dbReference type="RefSeq" id="WP_003157522.1">
    <property type="nucleotide sequence ID" value="NC_009656.1"/>
</dbReference>
<dbReference type="SMR" id="A6V3B8"/>
<dbReference type="GeneID" id="77220529"/>
<dbReference type="KEGG" id="pap:PSPA7_2181"/>
<dbReference type="HOGENOM" id="CLU_155659_2_2_6"/>
<dbReference type="Proteomes" id="UP000001582">
    <property type="component" value="Chromosome"/>
</dbReference>
<dbReference type="GO" id="GO:0005829">
    <property type="term" value="C:cytosol"/>
    <property type="evidence" value="ECO:0007669"/>
    <property type="project" value="TreeGrafter"/>
</dbReference>
<dbReference type="FunFam" id="2.20.25.10:FF:000002">
    <property type="entry name" value="UPF0434 protein YcaR"/>
    <property type="match status" value="1"/>
</dbReference>
<dbReference type="Gene3D" id="2.20.25.10">
    <property type="match status" value="1"/>
</dbReference>
<dbReference type="HAMAP" id="MF_01187">
    <property type="entry name" value="UPF0434"/>
    <property type="match status" value="1"/>
</dbReference>
<dbReference type="InterPro" id="IPR005651">
    <property type="entry name" value="Trm112-like"/>
</dbReference>
<dbReference type="PANTHER" id="PTHR33505:SF4">
    <property type="entry name" value="PROTEIN PREY, MITOCHONDRIAL"/>
    <property type="match status" value="1"/>
</dbReference>
<dbReference type="PANTHER" id="PTHR33505">
    <property type="entry name" value="ZGC:162634"/>
    <property type="match status" value="1"/>
</dbReference>
<dbReference type="Pfam" id="PF03966">
    <property type="entry name" value="Trm112p"/>
    <property type="match status" value="1"/>
</dbReference>
<dbReference type="SUPFAM" id="SSF158997">
    <property type="entry name" value="Trm112p-like"/>
    <property type="match status" value="1"/>
</dbReference>
<protein>
    <recommendedName>
        <fullName evidence="1">UPF0434 protein PSPA7_2181</fullName>
    </recommendedName>
</protein>
<accession>A6V3B8</accession>
<gene>
    <name type="ordered locus">PSPA7_2181</name>
</gene>
<reference key="1">
    <citation type="submission" date="2007-06" db="EMBL/GenBank/DDBJ databases">
        <authorList>
            <person name="Dodson R.J."/>
            <person name="Harkins D."/>
            <person name="Paulsen I.T."/>
        </authorList>
    </citation>
    <scope>NUCLEOTIDE SEQUENCE [LARGE SCALE GENOMIC DNA]</scope>
    <source>
        <strain>DSM 24068 / PA7</strain>
    </source>
</reference>
<proteinExistence type="inferred from homology"/>
<comment type="similarity">
    <text evidence="1">Belongs to the UPF0434 family.</text>
</comment>
<sequence length="61" mass="6691">MDPKLLDILACPLTKGPLVLSEDKSELISKQAGLAYPIRDGIPVMLESEARALNVDERLDK</sequence>
<name>Y2181_PSEP7</name>